<organism>
    <name type="scientific">Homo sapiens</name>
    <name type="common">Human</name>
    <dbReference type="NCBI Taxonomy" id="9606"/>
    <lineage>
        <taxon>Eukaryota</taxon>
        <taxon>Metazoa</taxon>
        <taxon>Chordata</taxon>
        <taxon>Craniata</taxon>
        <taxon>Vertebrata</taxon>
        <taxon>Euteleostomi</taxon>
        <taxon>Mammalia</taxon>
        <taxon>Eutheria</taxon>
        <taxon>Euarchontoglires</taxon>
        <taxon>Primates</taxon>
        <taxon>Haplorrhini</taxon>
        <taxon>Catarrhini</taxon>
        <taxon>Hominidae</taxon>
        <taxon>Homo</taxon>
    </lineage>
</organism>
<accession>P43351</accession>
<accession>Q13205</accession>
<accession>Q9Y5T7</accession>
<accession>Q9Y5T8</accession>
<accession>Q9Y5T9</accession>
<name>RAD52_HUMAN</name>
<comment type="function">
    <text evidence="3 5">Involved in double-stranded break repair. Plays a central role in genetic recombination and DNA repair by promoting the annealing of complementary single-stranded DNA and by stimulation of the RAD51 recombinase.</text>
</comment>
<comment type="subunit">
    <text evidence="2 3 4 5">The full-length protein forms heptameric rings (PubMed:12191481). Interacts with ABL1 (PubMed:12379650). Interacts with RPA2; the interaction is direct and associates RAD52 with the RPA complex (PubMed:8702565). Interacts with RAD51AP1 (PubMed:31400850).</text>
</comment>
<comment type="interaction">
    <interactant intactId="EBI-706448">
        <id>P43351</id>
    </interactant>
    <interactant intactId="EBI-374238">
        <id>Q9NPI6</id>
        <label>DCP1A</label>
    </interactant>
    <organismsDiffer>false</organismsDiffer>
    <experiments>5</experiments>
</comment>
<comment type="interaction">
    <interactant intactId="EBI-706448">
        <id>P43351</id>
    </interactant>
    <interactant intactId="EBI-358297">
        <id>O00505</id>
        <label>KPNA3</label>
    </interactant>
    <organismsDiffer>false</organismsDiffer>
    <experiments>3</experiments>
</comment>
<comment type="interaction">
    <interactant intactId="EBI-706448">
        <id>P43351</id>
    </interactant>
    <interactant intactId="EBI-540602">
        <id>O15131</id>
        <label>KPNA5</label>
    </interactant>
    <organismsDiffer>false</organismsDiffer>
    <experiments>3</experiments>
</comment>
<comment type="interaction">
    <interactant intactId="EBI-706448">
        <id>P43351</id>
    </interactant>
    <interactant intactId="EBI-2864512">
        <id>P50221</id>
        <label>MEOX1</label>
    </interactant>
    <organismsDiffer>false</organismsDiffer>
    <experiments>3</experiments>
</comment>
<comment type="interaction">
    <interactant intactId="EBI-706448">
        <id>P43351</id>
    </interactant>
    <interactant intactId="EBI-16439278">
        <id>Q6FHY5</id>
        <label>MEOX2</label>
    </interactant>
    <organismsDiffer>false</organismsDiffer>
    <experiments>3</experiments>
</comment>
<comment type="interaction">
    <interactant intactId="EBI-706448">
        <id>P43351</id>
    </interactant>
    <interactant intactId="EBI-11956831">
        <id>Q13952-2</id>
        <label>NFYC</label>
    </interactant>
    <organismsDiffer>false</organismsDiffer>
    <experiments>3</experiments>
</comment>
<comment type="interaction">
    <interactant intactId="EBI-706448">
        <id>P43351</id>
    </interactant>
    <interactant intactId="EBI-296331">
        <id>Q02548</id>
        <label>PAX5</label>
    </interactant>
    <organismsDiffer>false</organismsDiffer>
    <experiments>3</experiments>
</comment>
<comment type="interaction">
    <interactant intactId="EBI-706448">
        <id>P43351</id>
    </interactant>
    <interactant intactId="EBI-751877">
        <id>Q9H4B4</id>
        <label>PLK3</label>
    </interactant>
    <organismsDiffer>false</organismsDiffer>
    <experiments>3</experiments>
</comment>
<comment type="interaction">
    <interactant intactId="EBI-706448">
        <id>P43351</id>
    </interactant>
    <interactant intactId="EBI-297202">
        <id>Q06609</id>
        <label>RAD51</label>
    </interactant>
    <organismsDiffer>false</organismsDiffer>
    <experiments>3</experiments>
</comment>
<comment type="interaction">
    <interactant intactId="EBI-706448">
        <id>P43351</id>
    </interactant>
    <interactant intactId="EBI-706448">
        <id>P43351</id>
        <label>RAD52</label>
    </interactant>
    <organismsDiffer>false</organismsDiffer>
    <experiments>7</experiments>
</comment>
<comment type="interaction">
    <interactant intactId="EBI-706448">
        <id>P43351</id>
    </interactant>
    <interactant intactId="EBI-10288724">
        <id>Q8NG50</id>
        <label>RDM1</label>
    </interactant>
    <organismsDiffer>false</organismsDiffer>
    <experiments>5</experiments>
</comment>
<comment type="interaction">
    <interactant intactId="EBI-706448">
        <id>P43351</id>
    </interactant>
    <interactant intactId="EBI-621428">
        <id>P35244</id>
        <label>RPA3</label>
    </interactant>
    <organismsDiffer>false</organismsDiffer>
    <experiments>3</experiments>
</comment>
<comment type="interaction">
    <interactant intactId="EBI-706448">
        <id>P43351</id>
    </interactant>
    <interactant intactId="EBI-368417">
        <id>Q14191</id>
        <label>WRN</label>
    </interactant>
    <organismsDiffer>false</organismsDiffer>
    <experiments>9</experiments>
</comment>
<comment type="subcellular location">
    <subcellularLocation>
        <location evidence="9">Nucleus</location>
    </subcellularLocation>
</comment>
<comment type="alternative products">
    <event type="alternative splicing"/>
    <isoform>
        <id>P43351-1</id>
        <name>alpha</name>
        <sequence type="displayed"/>
    </isoform>
    <isoform>
        <id>P43351-2</id>
        <name>beta</name>
        <sequence type="described" ref="VSP_047753 VSP_047754"/>
    </isoform>
    <isoform>
        <id>P43351-3</id>
        <name>gamma</name>
        <sequence type="described" ref="VSP_047750 VSP_047752"/>
    </isoform>
    <isoform>
        <id>P43351-4</id>
        <name>delta</name>
        <sequence type="described" ref="VSP_047749 VSP_047751"/>
    </isoform>
</comment>
<comment type="PTM">
    <text evidence="3">Phosphorylated upon DNA damage by ABL1, and probably by ATM or ATR.</text>
</comment>
<comment type="miscellaneous">
    <molecule>Isoform beta</molecule>
    <text evidence="9">Unable to interact with isoform alpha, may act as dominant negative.</text>
</comment>
<comment type="miscellaneous">
    <molecule>Isoform gamma</molecule>
    <text evidence="9">Unable to interact with isoform alpha, may act as dominant negative.</text>
</comment>
<comment type="miscellaneous">
    <molecule>Isoform delta</molecule>
    <text evidence="9">Unable to interact with isoform alpha, may act as dominant negative.</text>
</comment>
<comment type="similarity">
    <text evidence="9">Belongs to the RAD52 family.</text>
</comment>
<reference key="1">
    <citation type="journal article" date="1995" name="Genomics">
        <title>The human and mouse homologs of the yeast RAD52 gene: cDNA cloning, sequence analysis, assignment to human chromosome 12p12.2-p13, and mRNA expression in mouse tissues.</title>
        <authorList>
            <person name="Shen Z."/>
            <person name="Denison K."/>
            <person name="Lobb R."/>
            <person name="Gatewood J.M."/>
            <person name="Chen D.J."/>
        </authorList>
    </citation>
    <scope>NUCLEOTIDE SEQUENCE [MRNA] (ISOFORM ALPHA)</scope>
</reference>
<reference key="2">
    <citation type="journal article" date="1994" name="Mutat. Res.">
        <title>Cloning of human and mouse genes homologous to RAD52, a yeast gene involved in DNA repair and recombination.</title>
        <authorList>
            <person name="Muris D.F."/>
            <person name="Bezzubova O."/>
            <person name="Buerstedde J.-M."/>
            <person name="Vreeken K."/>
            <person name="Balajee A.S."/>
            <person name="Osgood C.J."/>
            <person name="Troelstra C."/>
            <person name="Hoeijmakers J.H."/>
            <person name="Ostermann K."/>
            <person name="Schmidt H."/>
            <person name="Natarajan A.T."/>
            <person name="Eeken J.C.J."/>
            <person name="Lohman P.H.M."/>
            <person name="Pastink A."/>
        </authorList>
    </citation>
    <scope>NUCLEOTIDE SEQUENCE [MRNA] (ISOFORM ALPHA)</scope>
    <source>
        <tissue>Testis</tissue>
    </source>
</reference>
<reference key="3">
    <citation type="journal article" date="1995" name="J. Biol. Chem.">
        <title>Expression of human RAD52 confers resistance to ionizing radiation in mammalian cells.</title>
        <authorList>
            <person name="Park M.S."/>
        </authorList>
    </citation>
    <scope>NUCLEOTIDE SEQUENCE [MRNA] (ISOFORM ALPHA)</scope>
    <source>
        <tissue>Spleen</tissue>
    </source>
</reference>
<reference key="4">
    <citation type="journal article" date="1999" name="Biochim. Biophys. Acta">
        <title>Identification of novel isoforms of human RAD52.</title>
        <authorList>
            <person name="Kito K."/>
            <person name="Wada H."/>
            <person name="Yeh E.T."/>
            <person name="Kamitani T."/>
        </authorList>
    </citation>
    <scope>NUCLEOTIDE SEQUENCE [MRNA] (ISOFORMS BETA; GAMMA AND DELTA)</scope>
    <scope>ALTERNATIVE SPLICING</scope>
    <source>
        <tissue>Testis</tissue>
    </source>
</reference>
<reference key="5">
    <citation type="journal article" date="2004" name="Nat. Genet.">
        <title>Complete sequencing and characterization of 21,243 full-length human cDNAs.</title>
        <authorList>
            <person name="Ota T."/>
            <person name="Suzuki Y."/>
            <person name="Nishikawa T."/>
            <person name="Otsuki T."/>
            <person name="Sugiyama T."/>
            <person name="Irie R."/>
            <person name="Wakamatsu A."/>
            <person name="Hayashi K."/>
            <person name="Sato H."/>
            <person name="Nagai K."/>
            <person name="Kimura K."/>
            <person name="Makita H."/>
            <person name="Sekine M."/>
            <person name="Obayashi M."/>
            <person name="Nishi T."/>
            <person name="Shibahara T."/>
            <person name="Tanaka T."/>
            <person name="Ishii S."/>
            <person name="Yamamoto J."/>
            <person name="Saito K."/>
            <person name="Kawai Y."/>
            <person name="Isono Y."/>
            <person name="Nakamura Y."/>
            <person name="Nagahari K."/>
            <person name="Murakami K."/>
            <person name="Yasuda T."/>
            <person name="Iwayanagi T."/>
            <person name="Wagatsuma M."/>
            <person name="Shiratori A."/>
            <person name="Sudo H."/>
            <person name="Hosoiri T."/>
            <person name="Kaku Y."/>
            <person name="Kodaira H."/>
            <person name="Kondo H."/>
            <person name="Sugawara M."/>
            <person name="Takahashi M."/>
            <person name="Kanda K."/>
            <person name="Yokoi T."/>
            <person name="Furuya T."/>
            <person name="Kikkawa E."/>
            <person name="Omura Y."/>
            <person name="Abe K."/>
            <person name="Kamihara K."/>
            <person name="Katsuta N."/>
            <person name="Sato K."/>
            <person name="Tanikawa M."/>
            <person name="Yamazaki M."/>
            <person name="Ninomiya K."/>
            <person name="Ishibashi T."/>
            <person name="Yamashita H."/>
            <person name="Murakawa K."/>
            <person name="Fujimori K."/>
            <person name="Tanai H."/>
            <person name="Kimata M."/>
            <person name="Watanabe M."/>
            <person name="Hiraoka S."/>
            <person name="Chiba Y."/>
            <person name="Ishida S."/>
            <person name="Ono Y."/>
            <person name="Takiguchi S."/>
            <person name="Watanabe S."/>
            <person name="Yosida M."/>
            <person name="Hotuta T."/>
            <person name="Kusano J."/>
            <person name="Kanehori K."/>
            <person name="Takahashi-Fujii A."/>
            <person name="Hara H."/>
            <person name="Tanase T.-O."/>
            <person name="Nomura Y."/>
            <person name="Togiya S."/>
            <person name="Komai F."/>
            <person name="Hara R."/>
            <person name="Takeuchi K."/>
            <person name="Arita M."/>
            <person name="Imose N."/>
            <person name="Musashino K."/>
            <person name="Yuuki H."/>
            <person name="Oshima A."/>
            <person name="Sasaki N."/>
            <person name="Aotsuka S."/>
            <person name="Yoshikawa Y."/>
            <person name="Matsunawa H."/>
            <person name="Ichihara T."/>
            <person name="Shiohata N."/>
            <person name="Sano S."/>
            <person name="Moriya S."/>
            <person name="Momiyama H."/>
            <person name="Satoh N."/>
            <person name="Takami S."/>
            <person name="Terashima Y."/>
            <person name="Suzuki O."/>
            <person name="Nakagawa S."/>
            <person name="Senoh A."/>
            <person name="Mizoguchi H."/>
            <person name="Goto Y."/>
            <person name="Shimizu F."/>
            <person name="Wakebe H."/>
            <person name="Hishigaki H."/>
            <person name="Watanabe T."/>
            <person name="Sugiyama A."/>
            <person name="Takemoto M."/>
            <person name="Kawakami B."/>
            <person name="Yamazaki M."/>
            <person name="Watanabe K."/>
            <person name="Kumagai A."/>
            <person name="Itakura S."/>
            <person name="Fukuzumi Y."/>
            <person name="Fujimori Y."/>
            <person name="Komiyama M."/>
            <person name="Tashiro H."/>
            <person name="Tanigami A."/>
            <person name="Fujiwara T."/>
            <person name="Ono T."/>
            <person name="Yamada K."/>
            <person name="Fujii Y."/>
            <person name="Ozaki K."/>
            <person name="Hirao M."/>
            <person name="Ohmori Y."/>
            <person name="Kawabata A."/>
            <person name="Hikiji T."/>
            <person name="Kobatake N."/>
            <person name="Inagaki H."/>
            <person name="Ikema Y."/>
            <person name="Okamoto S."/>
            <person name="Okitani R."/>
            <person name="Kawakami T."/>
            <person name="Noguchi S."/>
            <person name="Itoh T."/>
            <person name="Shigeta K."/>
            <person name="Senba T."/>
            <person name="Matsumura K."/>
            <person name="Nakajima Y."/>
            <person name="Mizuno T."/>
            <person name="Morinaga M."/>
            <person name="Sasaki M."/>
            <person name="Togashi T."/>
            <person name="Oyama M."/>
            <person name="Hata H."/>
            <person name="Watanabe M."/>
            <person name="Komatsu T."/>
            <person name="Mizushima-Sugano J."/>
            <person name="Satoh T."/>
            <person name="Shirai Y."/>
            <person name="Takahashi Y."/>
            <person name="Nakagawa K."/>
            <person name="Okumura K."/>
            <person name="Nagase T."/>
            <person name="Nomura N."/>
            <person name="Kikuchi H."/>
            <person name="Masuho Y."/>
            <person name="Yamashita R."/>
            <person name="Nakai K."/>
            <person name="Yada T."/>
            <person name="Nakamura Y."/>
            <person name="Ohara O."/>
            <person name="Isogai T."/>
            <person name="Sugano S."/>
        </authorList>
    </citation>
    <scope>NUCLEOTIDE SEQUENCE [LARGE SCALE MRNA] (ISOFORMS GAMMA AND DELTA)</scope>
    <source>
        <tissue>Amygdala</tissue>
        <tissue>Synovium</tissue>
    </source>
</reference>
<reference key="6">
    <citation type="submission" date="2004-01" db="EMBL/GenBank/DDBJ databases">
        <authorList>
            <consortium name="NIEHS SNPs program"/>
        </authorList>
    </citation>
    <scope>NUCLEOTIDE SEQUENCE [GENOMIC DNA]</scope>
    <scope>VARIANTS TRP-70; GLU-221 AND ASN-287</scope>
</reference>
<reference key="7">
    <citation type="journal article" date="2006" name="Nature">
        <title>The finished DNA sequence of human chromosome 12.</title>
        <authorList>
            <person name="Scherer S.E."/>
            <person name="Muzny D.M."/>
            <person name="Buhay C.J."/>
            <person name="Chen R."/>
            <person name="Cree A."/>
            <person name="Ding Y."/>
            <person name="Dugan-Rocha S."/>
            <person name="Gill R."/>
            <person name="Gunaratne P."/>
            <person name="Harris R.A."/>
            <person name="Hawes A.C."/>
            <person name="Hernandez J."/>
            <person name="Hodgson A.V."/>
            <person name="Hume J."/>
            <person name="Jackson A."/>
            <person name="Khan Z.M."/>
            <person name="Kovar-Smith C."/>
            <person name="Lewis L.R."/>
            <person name="Lozado R.J."/>
            <person name="Metzker M.L."/>
            <person name="Milosavljevic A."/>
            <person name="Miner G.R."/>
            <person name="Montgomery K.T."/>
            <person name="Morgan M.B."/>
            <person name="Nazareth L.V."/>
            <person name="Scott G."/>
            <person name="Sodergren E."/>
            <person name="Song X.-Z."/>
            <person name="Steffen D."/>
            <person name="Lovering R.C."/>
            <person name="Wheeler D.A."/>
            <person name="Worley K.C."/>
            <person name="Yuan Y."/>
            <person name="Zhang Z."/>
            <person name="Adams C.Q."/>
            <person name="Ansari-Lari M.A."/>
            <person name="Ayele M."/>
            <person name="Brown M.J."/>
            <person name="Chen G."/>
            <person name="Chen Z."/>
            <person name="Clerc-Blankenburg K.P."/>
            <person name="Davis C."/>
            <person name="Delgado O."/>
            <person name="Dinh H.H."/>
            <person name="Draper H."/>
            <person name="Gonzalez-Garay M.L."/>
            <person name="Havlak P."/>
            <person name="Jackson L.R."/>
            <person name="Jacob L.S."/>
            <person name="Kelly S.H."/>
            <person name="Li L."/>
            <person name="Li Z."/>
            <person name="Liu J."/>
            <person name="Liu W."/>
            <person name="Lu J."/>
            <person name="Maheshwari M."/>
            <person name="Nguyen B.-V."/>
            <person name="Okwuonu G.O."/>
            <person name="Pasternak S."/>
            <person name="Perez L.M."/>
            <person name="Plopper F.J.H."/>
            <person name="Santibanez J."/>
            <person name="Shen H."/>
            <person name="Tabor P.E."/>
            <person name="Verduzco D."/>
            <person name="Waldron L."/>
            <person name="Wang Q."/>
            <person name="Williams G.A."/>
            <person name="Zhang J."/>
            <person name="Zhou J."/>
            <person name="Allen C.C."/>
            <person name="Amin A.G."/>
            <person name="Anyalebechi V."/>
            <person name="Bailey M."/>
            <person name="Barbaria J.A."/>
            <person name="Bimage K.E."/>
            <person name="Bryant N.P."/>
            <person name="Burch P.E."/>
            <person name="Burkett C.E."/>
            <person name="Burrell K.L."/>
            <person name="Calderon E."/>
            <person name="Cardenas V."/>
            <person name="Carter K."/>
            <person name="Casias K."/>
            <person name="Cavazos I."/>
            <person name="Cavazos S.R."/>
            <person name="Ceasar H."/>
            <person name="Chacko J."/>
            <person name="Chan S.N."/>
            <person name="Chavez D."/>
            <person name="Christopoulos C."/>
            <person name="Chu J."/>
            <person name="Cockrell R."/>
            <person name="Cox C.D."/>
            <person name="Dang M."/>
            <person name="Dathorne S.R."/>
            <person name="David R."/>
            <person name="Davis C.M."/>
            <person name="Davy-Carroll L."/>
            <person name="Deshazo D.R."/>
            <person name="Donlin J.E."/>
            <person name="D'Souza L."/>
            <person name="Eaves K.A."/>
            <person name="Egan A."/>
            <person name="Emery-Cohen A.J."/>
            <person name="Escotto M."/>
            <person name="Flagg N."/>
            <person name="Forbes L.D."/>
            <person name="Gabisi A.M."/>
            <person name="Garza M."/>
            <person name="Hamilton C."/>
            <person name="Henderson N."/>
            <person name="Hernandez O."/>
            <person name="Hines S."/>
            <person name="Hogues M.E."/>
            <person name="Huang M."/>
            <person name="Idlebird D.G."/>
            <person name="Johnson R."/>
            <person name="Jolivet A."/>
            <person name="Jones S."/>
            <person name="Kagan R."/>
            <person name="King L.M."/>
            <person name="Leal B."/>
            <person name="Lebow H."/>
            <person name="Lee S."/>
            <person name="LeVan J.M."/>
            <person name="Lewis L.C."/>
            <person name="London P."/>
            <person name="Lorensuhewa L.M."/>
            <person name="Loulseged H."/>
            <person name="Lovett D.A."/>
            <person name="Lucier A."/>
            <person name="Lucier R.L."/>
            <person name="Ma J."/>
            <person name="Madu R.C."/>
            <person name="Mapua P."/>
            <person name="Martindale A.D."/>
            <person name="Martinez E."/>
            <person name="Massey E."/>
            <person name="Mawhiney S."/>
            <person name="Meador M.G."/>
            <person name="Mendez S."/>
            <person name="Mercado C."/>
            <person name="Mercado I.C."/>
            <person name="Merritt C.E."/>
            <person name="Miner Z.L."/>
            <person name="Minja E."/>
            <person name="Mitchell T."/>
            <person name="Mohabbat F."/>
            <person name="Mohabbat K."/>
            <person name="Montgomery B."/>
            <person name="Moore N."/>
            <person name="Morris S."/>
            <person name="Munidasa M."/>
            <person name="Ngo R.N."/>
            <person name="Nguyen N.B."/>
            <person name="Nickerson E."/>
            <person name="Nwaokelemeh O.O."/>
            <person name="Nwokenkwo S."/>
            <person name="Obregon M."/>
            <person name="Oguh M."/>
            <person name="Oragunye N."/>
            <person name="Oviedo R.J."/>
            <person name="Parish B.J."/>
            <person name="Parker D.N."/>
            <person name="Parrish J."/>
            <person name="Parks K.L."/>
            <person name="Paul H.A."/>
            <person name="Payton B.A."/>
            <person name="Perez A."/>
            <person name="Perrin W."/>
            <person name="Pickens A."/>
            <person name="Primus E.L."/>
            <person name="Pu L.-L."/>
            <person name="Puazo M."/>
            <person name="Quiles M.M."/>
            <person name="Quiroz J.B."/>
            <person name="Rabata D."/>
            <person name="Reeves K."/>
            <person name="Ruiz S.J."/>
            <person name="Shao H."/>
            <person name="Sisson I."/>
            <person name="Sonaike T."/>
            <person name="Sorelle R.P."/>
            <person name="Sutton A.E."/>
            <person name="Svatek A.F."/>
            <person name="Svetz L.A."/>
            <person name="Tamerisa K.S."/>
            <person name="Taylor T.R."/>
            <person name="Teague B."/>
            <person name="Thomas N."/>
            <person name="Thorn R.D."/>
            <person name="Trejos Z.Y."/>
            <person name="Trevino B.K."/>
            <person name="Ukegbu O.N."/>
            <person name="Urban J.B."/>
            <person name="Vasquez L.I."/>
            <person name="Vera V.A."/>
            <person name="Villasana D.M."/>
            <person name="Wang L."/>
            <person name="Ward-Moore S."/>
            <person name="Warren J.T."/>
            <person name="Wei X."/>
            <person name="White F."/>
            <person name="Williamson A.L."/>
            <person name="Wleczyk R."/>
            <person name="Wooden H.S."/>
            <person name="Wooden S.H."/>
            <person name="Yen J."/>
            <person name="Yoon L."/>
            <person name="Yoon V."/>
            <person name="Zorrilla S.E."/>
            <person name="Nelson D."/>
            <person name="Kucherlapati R."/>
            <person name="Weinstock G."/>
            <person name="Gibbs R.A."/>
        </authorList>
    </citation>
    <scope>NUCLEOTIDE SEQUENCE [LARGE SCALE GENOMIC DNA]</scope>
</reference>
<reference key="8">
    <citation type="submission" date="2005-09" db="EMBL/GenBank/DDBJ databases">
        <authorList>
            <person name="Mural R.J."/>
            <person name="Istrail S."/>
            <person name="Sutton G."/>
            <person name="Florea L."/>
            <person name="Halpern A.L."/>
            <person name="Mobarry C.M."/>
            <person name="Lippert R."/>
            <person name="Walenz B."/>
            <person name="Shatkay H."/>
            <person name="Dew I."/>
            <person name="Miller J.R."/>
            <person name="Flanigan M.J."/>
            <person name="Edwards N.J."/>
            <person name="Bolanos R."/>
            <person name="Fasulo D."/>
            <person name="Halldorsson B.V."/>
            <person name="Hannenhalli S."/>
            <person name="Turner R."/>
            <person name="Yooseph S."/>
            <person name="Lu F."/>
            <person name="Nusskern D.R."/>
            <person name="Shue B.C."/>
            <person name="Zheng X.H."/>
            <person name="Zhong F."/>
            <person name="Delcher A.L."/>
            <person name="Huson D.H."/>
            <person name="Kravitz S.A."/>
            <person name="Mouchard L."/>
            <person name="Reinert K."/>
            <person name="Remington K.A."/>
            <person name="Clark A.G."/>
            <person name="Waterman M.S."/>
            <person name="Eichler E.E."/>
            <person name="Adams M.D."/>
            <person name="Hunkapiller M.W."/>
            <person name="Myers E.W."/>
            <person name="Venter J.C."/>
        </authorList>
    </citation>
    <scope>NUCLEOTIDE SEQUENCE [LARGE SCALE GENOMIC DNA]</scope>
</reference>
<reference key="9">
    <citation type="journal article" date="1996" name="J. Biol. Chem.">
        <title>Physical interaction between human RAD52 and RPA is required for homologous recombination in mammalian cells.</title>
        <authorList>
            <person name="Park M.S."/>
            <person name="Ludwig D.L."/>
            <person name="Stigger E."/>
            <person name="Lee S.H."/>
        </authorList>
    </citation>
    <scope>FUNCTION IN HOMOLOGOUS RECOMBINATION</scope>
    <scope>INTERACTION WITH RPA2</scope>
    <scope>REGION</scope>
</reference>
<reference key="10">
    <citation type="journal article" date="2002" name="J. Biol. Chem.">
        <title>Regulation of ionizing radiation-induced Rad52 nuclear foci formation by c-Abl-mediated phosphorylation.</title>
        <authorList>
            <person name="Kitao H."/>
            <person name="Yuan Z.M."/>
        </authorList>
    </citation>
    <scope>FUNCTION</scope>
    <scope>INTERACTION WITH ABL1</scope>
    <scope>PHOSPHORYLATION AT TYR-104</scope>
</reference>
<reference key="11">
    <citation type="journal article" date="2007" name="Science">
        <title>ATM and ATR substrate analysis reveals extensive protein networks responsive to DNA damage.</title>
        <authorList>
            <person name="Matsuoka S."/>
            <person name="Ballif B.A."/>
            <person name="Smogorzewska A."/>
            <person name="McDonald E.R. III"/>
            <person name="Hurov K.E."/>
            <person name="Luo J."/>
            <person name="Bakalarski C.E."/>
            <person name="Zhao Z."/>
            <person name="Solimini N."/>
            <person name="Lerenthal Y."/>
            <person name="Shiloh Y."/>
            <person name="Gygi S.P."/>
            <person name="Elledge S.J."/>
        </authorList>
    </citation>
    <scope>PHOSPHORYLATION [LARGE SCALE ANALYSIS] AT THR-318</scope>
    <scope>IDENTIFICATION BY MASS SPECTROMETRY [LARGE SCALE ANALYSIS]</scope>
    <source>
        <tissue>Embryonic kidney</tissue>
    </source>
</reference>
<reference key="12">
    <citation type="journal article" date="2008" name="Mol. Cell">
        <title>Kinase-selective enrichment enables quantitative phosphoproteomics of the kinome across the cell cycle.</title>
        <authorList>
            <person name="Daub H."/>
            <person name="Olsen J.V."/>
            <person name="Bairlein M."/>
            <person name="Gnad F."/>
            <person name="Oppermann F.S."/>
            <person name="Korner R."/>
            <person name="Greff Z."/>
            <person name="Keri G."/>
            <person name="Stemmann O."/>
            <person name="Mann M."/>
        </authorList>
    </citation>
    <scope>PHOSPHORYLATION [LARGE SCALE ANALYSIS] AT SER-199 AND THR-335</scope>
    <scope>IDENTIFICATION BY MASS SPECTROMETRY [LARGE SCALE ANALYSIS]</scope>
    <source>
        <tissue>Cervix carcinoma</tissue>
    </source>
</reference>
<reference key="13">
    <citation type="journal article" date="2013" name="J. Proteome Res.">
        <title>Toward a comprehensive characterization of a human cancer cell phosphoproteome.</title>
        <authorList>
            <person name="Zhou H."/>
            <person name="Di Palma S."/>
            <person name="Preisinger C."/>
            <person name="Peng M."/>
            <person name="Polat A.N."/>
            <person name="Heck A.J."/>
            <person name="Mohammed S."/>
        </authorList>
    </citation>
    <scope>IDENTIFICATION BY MASS SPECTROMETRY [LARGE SCALE ANALYSIS]</scope>
    <source>
        <tissue>Erythroleukemia</tissue>
    </source>
</reference>
<reference key="14">
    <citation type="journal article" date="2019" name="Mol. Cell">
        <title>RAD51AP1 is an essential mediator of alternative lengthening of telomeres.</title>
        <authorList>
            <person name="Barroso-Gonzalez J."/>
            <person name="Garcia-Exposito L."/>
            <person name="Hoang S.M."/>
            <person name="Lynskey M.L."/>
            <person name="Roncaioli J.L."/>
            <person name="Ghosh A."/>
            <person name="Wallace C.T."/>
            <person name="de Vitis M."/>
            <person name="Modesti M."/>
            <person name="Bernstein K.A."/>
            <person name="Sarkar S.N."/>
            <person name="Watkins S.C."/>
            <person name="O'Sullivan R.J."/>
        </authorList>
    </citation>
    <scope>INTERACTION WITH RAD51AP1</scope>
</reference>
<reference key="15">
    <citation type="journal article" date="2019" name="Mol. Cell">
        <title>RAD51AP1 is an essential mediator of alternative lengthening of telomeres.</title>
        <authorList>
            <person name="Barroso-Gonzalez J."/>
            <person name="Garcia-Exposito L."/>
            <person name="Hoang S.M."/>
            <person name="Lynskey M.L."/>
            <person name="Roncaioli J.L."/>
            <person name="Ghosh A."/>
            <person name="Wallace C.T."/>
            <person name="Modesti M."/>
            <person name="Bernstein K.A."/>
            <person name="Sarkar S.N."/>
            <person name="Watkins S.C."/>
            <person name="O'Sullivan R.J."/>
        </authorList>
    </citation>
    <scope>ERRATUM OF PUBMED:31400850</scope>
</reference>
<reference key="16">
    <citation type="journal article" date="2002" name="Mol. Cell">
        <title>Crystal structure of the homologous-pairing domain from the human Rad52 recombinase in the undecameric form.</title>
        <authorList>
            <person name="Kagawa W."/>
            <person name="Kurumizaka H."/>
            <person name="Ishitani R."/>
            <person name="Fukai S."/>
            <person name="Nureki O."/>
            <person name="Shibata T."/>
            <person name="Yokoyama S."/>
        </authorList>
    </citation>
    <scope>X-RAY CRYSTALLOGRAPHY (2.85 ANGSTROMS) OF 1-212</scope>
    <scope>SUBUNIT</scope>
    <scope>DNA-BINDING REGION</scope>
    <scope>MUTAGENESIS OF ARG-55; TYR-65; LYS-152; ARG-153 AND ARG-156</scope>
</reference>
<reference key="17">
    <citation type="journal article" date="2002" name="Proc. Natl. Acad. Sci. U.S.A.">
        <title>Structure of the single-strand annealing domain of human RAD52 protein.</title>
        <authorList>
            <person name="Singleton M.R."/>
            <person name="Wentzell L.M."/>
            <person name="Liu Y."/>
            <person name="West S.C."/>
            <person name="Wigley D.B."/>
        </authorList>
    </citation>
    <scope>X-RAY CRYSTALLOGRAPHY (2.7 ANGSTROMS) OF 24-209</scope>
</reference>
<gene>
    <name type="primary">RAD52</name>
</gene>
<dbReference type="EMBL" id="U12134">
    <property type="protein sequence ID" value="AAA85793.1"/>
    <property type="molecule type" value="mRNA"/>
</dbReference>
<dbReference type="EMBL" id="L33262">
    <property type="protein sequence ID" value="AAB05203.1"/>
    <property type="molecule type" value="mRNA"/>
</dbReference>
<dbReference type="EMBL" id="U27516">
    <property type="protein sequence ID" value="AAA87554.1"/>
    <property type="molecule type" value="mRNA"/>
</dbReference>
<dbReference type="EMBL" id="AF125948">
    <property type="protein sequence ID" value="AAD24575.1"/>
    <property type="molecule type" value="mRNA"/>
</dbReference>
<dbReference type="EMBL" id="AF125949">
    <property type="protein sequence ID" value="AAD24576.1"/>
    <property type="molecule type" value="mRNA"/>
</dbReference>
<dbReference type="EMBL" id="AF125950">
    <property type="protein sequence ID" value="AAD24577.1"/>
    <property type="molecule type" value="mRNA"/>
</dbReference>
<dbReference type="EMBL" id="AK292160">
    <property type="protein sequence ID" value="BAF84849.1"/>
    <property type="molecule type" value="mRNA"/>
</dbReference>
<dbReference type="EMBL" id="AK312026">
    <property type="protein sequence ID" value="BAG34963.1"/>
    <property type="molecule type" value="mRNA"/>
</dbReference>
<dbReference type="EMBL" id="AY527412">
    <property type="protein sequence ID" value="AAS00097.1"/>
    <property type="molecule type" value="Genomic_DNA"/>
</dbReference>
<dbReference type="EMBL" id="AC004803">
    <property type="status" value="NOT_ANNOTATED_CDS"/>
    <property type="molecule type" value="Genomic_DNA"/>
</dbReference>
<dbReference type="EMBL" id="CH471116">
    <property type="protein sequence ID" value="EAW88943.1"/>
    <property type="molecule type" value="Genomic_DNA"/>
</dbReference>
<dbReference type="EMBL" id="CH471116">
    <property type="protein sequence ID" value="EAW88945.1"/>
    <property type="molecule type" value="Genomic_DNA"/>
</dbReference>
<dbReference type="EMBL" id="CH471116">
    <property type="protein sequence ID" value="EAW88946.1"/>
    <property type="molecule type" value="Genomic_DNA"/>
</dbReference>
<dbReference type="EMBL" id="CH471116">
    <property type="protein sequence ID" value="EAW88949.1"/>
    <property type="molecule type" value="Genomic_DNA"/>
</dbReference>
<dbReference type="CCDS" id="CCDS76501.1">
    <molecule id="P43351-2"/>
</dbReference>
<dbReference type="CCDS" id="CCDS8507.2">
    <molecule id="P43351-1"/>
</dbReference>
<dbReference type="PIR" id="A57518">
    <property type="entry name" value="A57518"/>
</dbReference>
<dbReference type="RefSeq" id="NP_001284348.1">
    <molecule id="P43351-1"/>
    <property type="nucleotide sequence ID" value="NM_001297419.1"/>
</dbReference>
<dbReference type="RefSeq" id="NP_001284349.1">
    <molecule id="P43351-2"/>
    <property type="nucleotide sequence ID" value="NM_001297420.1"/>
</dbReference>
<dbReference type="RefSeq" id="NP_602296.2">
    <molecule id="P43351-1"/>
    <property type="nucleotide sequence ID" value="NM_134424.4"/>
</dbReference>
<dbReference type="RefSeq" id="XP_005253777.1">
    <molecule id="P43351-1"/>
    <property type="nucleotide sequence ID" value="XM_005253720.6"/>
</dbReference>
<dbReference type="RefSeq" id="XP_005253778.1">
    <molecule id="P43351-1"/>
    <property type="nucleotide sequence ID" value="XM_005253721.3"/>
</dbReference>
<dbReference type="RefSeq" id="XP_011519292.1">
    <molecule id="P43351-1"/>
    <property type="nucleotide sequence ID" value="XM_011520990.3"/>
</dbReference>
<dbReference type="RefSeq" id="XP_011519293.1">
    <molecule id="P43351-1"/>
    <property type="nucleotide sequence ID" value="XM_011520991.3"/>
</dbReference>
<dbReference type="RefSeq" id="XP_016875258.1">
    <molecule id="P43351-1"/>
    <property type="nucleotide sequence ID" value="XM_017019769.2"/>
</dbReference>
<dbReference type="RefSeq" id="XP_047285238.1">
    <molecule id="P43351-1"/>
    <property type="nucleotide sequence ID" value="XM_047429282.1"/>
</dbReference>
<dbReference type="RefSeq" id="XP_047285247.1">
    <molecule id="P43351-2"/>
    <property type="nucleotide sequence ID" value="XM_047429291.1"/>
</dbReference>
<dbReference type="RefSeq" id="XP_054228757.1">
    <molecule id="P43351-1"/>
    <property type="nucleotide sequence ID" value="XM_054372782.1"/>
</dbReference>
<dbReference type="RefSeq" id="XP_054228758.1">
    <molecule id="P43351-1"/>
    <property type="nucleotide sequence ID" value="XM_054372783.1"/>
</dbReference>
<dbReference type="RefSeq" id="XP_054228759.1">
    <molecule id="P43351-1"/>
    <property type="nucleotide sequence ID" value="XM_054372784.1"/>
</dbReference>
<dbReference type="RefSeq" id="XP_054228760.1">
    <molecule id="P43351-1"/>
    <property type="nucleotide sequence ID" value="XM_054372785.1"/>
</dbReference>
<dbReference type="RefSeq" id="XP_054228772.1">
    <molecule id="P43351-2"/>
    <property type="nucleotide sequence ID" value="XM_054372797.1"/>
</dbReference>
<dbReference type="PDB" id="1H2I">
    <property type="method" value="X-ray"/>
    <property type="resolution" value="2.70 A"/>
    <property type="chains" value="A/B/C/D/E/F/G/H/I/J/K/L/M/N/O/P/Q/R/S/T/U/V=1-209"/>
</dbReference>
<dbReference type="PDB" id="1KN0">
    <property type="method" value="X-ray"/>
    <property type="resolution" value="2.85 A"/>
    <property type="chains" value="A/B/C/D/E/F/G/H/I/J/K=1-212"/>
</dbReference>
<dbReference type="PDB" id="5JRB">
    <property type="method" value="X-ray"/>
    <property type="resolution" value="2.40 A"/>
    <property type="chains" value="A/B/C/D/E/F/G/H/I/J/K=1-212"/>
</dbReference>
<dbReference type="PDB" id="5XRZ">
    <property type="method" value="X-ray"/>
    <property type="resolution" value="3.60 A"/>
    <property type="chains" value="A/B/C/D/E/F/G/H/I/J/K=1-212"/>
</dbReference>
<dbReference type="PDB" id="5XS0">
    <property type="method" value="X-ray"/>
    <property type="resolution" value="3.00 A"/>
    <property type="chains" value="A/B/C/D/E/F/G/H/I/J/K/L/M/N/O/P/Q/R/S/T/U/V=1-212"/>
</dbReference>
<dbReference type="PDB" id="8BJM">
    <property type="method" value="EM"/>
    <property type="resolution" value="2.20 A"/>
    <property type="chains" value="A/B/C/D/E/F/G/H/I/J/K=1-418"/>
</dbReference>
<dbReference type="PDB" id="8H1P">
    <property type="method" value="EM"/>
    <property type="resolution" value="3.48 A"/>
    <property type="chains" value="A/B/C/D/E/F/G/H/I/J/K=1-418"/>
</dbReference>
<dbReference type="PDB" id="8RIL">
    <property type="method" value="EM"/>
    <property type="resolution" value="2.90 A"/>
    <property type="chains" value="A/B/C/D/E/F/G/H/I/J/K=1-418"/>
</dbReference>
<dbReference type="PDB" id="8RJ3">
    <property type="method" value="EM"/>
    <property type="resolution" value="3.20 A"/>
    <property type="chains" value="A/B/C/D/E/F/G/H/I/J=1-418"/>
</dbReference>
<dbReference type="PDB" id="8RJW">
    <property type="method" value="EM"/>
    <property type="resolution" value="2.30 A"/>
    <property type="chains" value="A/B/C/D/E/F/G/H/I=1-418"/>
</dbReference>
<dbReference type="PDB" id="8TKQ">
    <property type="method" value="EM"/>
    <property type="resolution" value="2.50 A"/>
    <property type="chains" value="A/B/C/D/E/F/G/H/I/J/K=1-418"/>
</dbReference>
<dbReference type="PDBsum" id="1H2I"/>
<dbReference type="PDBsum" id="1KN0"/>
<dbReference type="PDBsum" id="5JRB"/>
<dbReference type="PDBsum" id="5XRZ"/>
<dbReference type="PDBsum" id="5XS0"/>
<dbReference type="PDBsum" id="8BJM"/>
<dbReference type="PDBsum" id="8H1P"/>
<dbReference type="PDBsum" id="8RIL"/>
<dbReference type="PDBsum" id="8RJ3"/>
<dbReference type="PDBsum" id="8RJW"/>
<dbReference type="PDBsum" id="8TKQ"/>
<dbReference type="EMDB" id="EMD-16089"/>
<dbReference type="EMDB" id="EMD-19189"/>
<dbReference type="EMDB" id="EMD-19193"/>
<dbReference type="EMDB" id="EMD-19253"/>
<dbReference type="EMDB" id="EMD-34430"/>
<dbReference type="EMDB" id="EMD-41357"/>
<dbReference type="SASBDB" id="P43351"/>
<dbReference type="SMR" id="P43351"/>
<dbReference type="BioGRID" id="111830">
    <property type="interactions" value="68"/>
</dbReference>
<dbReference type="CORUM" id="P43351"/>
<dbReference type="DIP" id="DIP-333N"/>
<dbReference type="FunCoup" id="P43351">
    <property type="interactions" value="1584"/>
</dbReference>
<dbReference type="IntAct" id="P43351">
    <property type="interactions" value="44"/>
</dbReference>
<dbReference type="MINT" id="P43351"/>
<dbReference type="STRING" id="9606.ENSP00000351284"/>
<dbReference type="BindingDB" id="P43351"/>
<dbReference type="ChEMBL" id="CHEMBL2362978"/>
<dbReference type="DrugCentral" id="P43351"/>
<dbReference type="iPTMnet" id="P43351"/>
<dbReference type="PhosphoSitePlus" id="P43351"/>
<dbReference type="BioMuta" id="RAD52"/>
<dbReference type="DMDM" id="1172823"/>
<dbReference type="jPOST" id="P43351"/>
<dbReference type="MassIVE" id="P43351"/>
<dbReference type="PaxDb" id="9606-ENSP00000351284"/>
<dbReference type="PeptideAtlas" id="P43351"/>
<dbReference type="ProteomicsDB" id="55613">
    <molecule id="P43351-1"/>
</dbReference>
<dbReference type="ProteomicsDB" id="86502"/>
<dbReference type="ProteomicsDB" id="86503"/>
<dbReference type="ProteomicsDB" id="86504"/>
<dbReference type="Antibodypedia" id="10276">
    <property type="antibodies" value="422 antibodies from 35 providers"/>
</dbReference>
<dbReference type="CPTC" id="P43351">
    <property type="antibodies" value="3 antibodies"/>
</dbReference>
<dbReference type="DNASU" id="5893"/>
<dbReference type="Ensembl" id="ENST00000358495.8">
    <molecule id="P43351-1"/>
    <property type="protein sequence ID" value="ENSP00000351284.3"/>
    <property type="gene ID" value="ENSG00000002016.18"/>
</dbReference>
<dbReference type="Ensembl" id="ENST00000430095.6">
    <molecule id="P43351-1"/>
    <property type="protein sequence ID" value="ENSP00000387901.2"/>
    <property type="gene ID" value="ENSG00000002016.18"/>
</dbReference>
<dbReference type="Ensembl" id="ENST00000461568.5">
    <molecule id="P43351-3"/>
    <property type="protein sequence ID" value="ENSP00000436008.1"/>
    <property type="gene ID" value="ENSG00000002016.18"/>
</dbReference>
<dbReference type="Ensembl" id="ENST00000468231.5">
    <molecule id="P43351-3"/>
    <property type="protein sequence ID" value="ENSP00000434703.1"/>
    <property type="gene ID" value="ENSG00000002016.18"/>
</dbReference>
<dbReference type="Ensembl" id="ENST00000541619.1">
    <molecule id="P43351-4"/>
    <property type="protein sequence ID" value="ENSP00000438965.1"/>
    <property type="gene ID" value="ENSG00000002016.18"/>
</dbReference>
<dbReference type="Ensembl" id="ENST00000544742.5">
    <molecule id="P43351-4"/>
    <property type="protein sequence ID" value="ENSP00000443254.1"/>
    <property type="gene ID" value="ENSG00000002016.18"/>
</dbReference>
<dbReference type="Ensembl" id="ENST00000545564.5">
    <molecule id="P43351-2"/>
    <property type="protein sequence ID" value="ENSP00000440268.1"/>
    <property type="gene ID" value="ENSG00000002016.18"/>
</dbReference>
<dbReference type="GeneID" id="5893"/>
<dbReference type="KEGG" id="hsa:5893"/>
<dbReference type="MANE-Select" id="ENST00000358495.8">
    <property type="protein sequence ID" value="ENSP00000351284.3"/>
    <property type="RefSeq nucleotide sequence ID" value="NM_134424.4"/>
    <property type="RefSeq protein sequence ID" value="NP_602296.2"/>
</dbReference>
<dbReference type="UCSC" id="uc001qiv.2">
    <molecule id="P43351-1"/>
    <property type="organism name" value="human"/>
</dbReference>
<dbReference type="AGR" id="HGNC:9824"/>
<dbReference type="CTD" id="5893"/>
<dbReference type="DisGeNET" id="5893"/>
<dbReference type="GeneCards" id="RAD52"/>
<dbReference type="HGNC" id="HGNC:9824">
    <property type="gene designation" value="RAD52"/>
</dbReference>
<dbReference type="HPA" id="ENSG00000002016">
    <property type="expression patterns" value="Low tissue specificity"/>
</dbReference>
<dbReference type="MIM" id="600392">
    <property type="type" value="gene"/>
</dbReference>
<dbReference type="neXtProt" id="NX_P43351"/>
<dbReference type="OpenTargets" id="ENSG00000002016"/>
<dbReference type="PharmGKB" id="PA34180"/>
<dbReference type="VEuPathDB" id="HostDB:ENSG00000002016"/>
<dbReference type="eggNOG" id="KOG4141">
    <property type="taxonomic scope" value="Eukaryota"/>
</dbReference>
<dbReference type="GeneTree" id="ENSGT00390000008766"/>
<dbReference type="HOGENOM" id="CLU_054400_0_0_1"/>
<dbReference type="InParanoid" id="P43351"/>
<dbReference type="OMA" id="RITGNWE"/>
<dbReference type="OrthoDB" id="206565at2759"/>
<dbReference type="PAN-GO" id="P43351">
    <property type="GO annotations" value="4 GO annotations based on evolutionary models"/>
</dbReference>
<dbReference type="PhylomeDB" id="P43351"/>
<dbReference type="TreeFam" id="TF101221"/>
<dbReference type="PathwayCommons" id="P43351"/>
<dbReference type="Reactome" id="R-HSA-3108214">
    <property type="pathway name" value="SUMOylation of DNA damage response and repair proteins"/>
</dbReference>
<dbReference type="Reactome" id="R-HSA-5685938">
    <property type="pathway name" value="HDR through Single Strand Annealing (SSA)"/>
</dbReference>
<dbReference type="Reactome" id="R-HSA-5685939">
    <property type="pathway name" value="HDR through MMEJ (alt-NHEJ)"/>
</dbReference>
<dbReference type="SignaLink" id="P43351"/>
<dbReference type="SIGNOR" id="P43351"/>
<dbReference type="BioGRID-ORCS" id="5893">
    <property type="hits" value="121 hits in 1157 CRISPR screens"/>
</dbReference>
<dbReference type="ChiTaRS" id="RAD52">
    <property type="organism name" value="human"/>
</dbReference>
<dbReference type="EvolutionaryTrace" id="P43351"/>
<dbReference type="GeneWiki" id="RAD52"/>
<dbReference type="GenomeRNAi" id="5893"/>
<dbReference type="Pharos" id="P43351">
    <property type="development level" value="Tchem"/>
</dbReference>
<dbReference type="PRO" id="PR:P43351"/>
<dbReference type="Proteomes" id="UP000005640">
    <property type="component" value="Chromosome 12"/>
</dbReference>
<dbReference type="RNAct" id="P43351">
    <property type="molecule type" value="protein"/>
</dbReference>
<dbReference type="Bgee" id="ENSG00000002016">
    <property type="expression patterns" value="Expressed in right uterine tube and 142 other cell types or tissues"/>
</dbReference>
<dbReference type="ExpressionAtlas" id="P43351">
    <property type="expression patterns" value="baseline and differential"/>
</dbReference>
<dbReference type="GO" id="GO:0005654">
    <property type="term" value="C:nucleoplasm"/>
    <property type="evidence" value="ECO:0000304"/>
    <property type="project" value="Reactome"/>
</dbReference>
<dbReference type="GO" id="GO:0005634">
    <property type="term" value="C:nucleus"/>
    <property type="evidence" value="ECO:0000314"/>
    <property type="project" value="MGI"/>
</dbReference>
<dbReference type="GO" id="GO:0032991">
    <property type="term" value="C:protein-containing complex"/>
    <property type="evidence" value="ECO:0000314"/>
    <property type="project" value="MGI"/>
</dbReference>
<dbReference type="GO" id="GO:0032993">
    <property type="term" value="C:protein-DNA complex"/>
    <property type="evidence" value="ECO:0000315"/>
    <property type="project" value="CAFA"/>
</dbReference>
<dbReference type="GO" id="GO:0003677">
    <property type="term" value="F:DNA binding"/>
    <property type="evidence" value="ECO:0000314"/>
    <property type="project" value="MGI"/>
</dbReference>
<dbReference type="GO" id="GO:0042802">
    <property type="term" value="F:identical protein binding"/>
    <property type="evidence" value="ECO:0000353"/>
    <property type="project" value="IntAct"/>
</dbReference>
<dbReference type="GO" id="GO:0003697">
    <property type="term" value="F:single-stranded DNA binding"/>
    <property type="evidence" value="ECO:0000315"/>
    <property type="project" value="CAFA"/>
</dbReference>
<dbReference type="GO" id="GO:0034599">
    <property type="term" value="P:cellular response to oxidative stress"/>
    <property type="evidence" value="ECO:0000314"/>
    <property type="project" value="MGI"/>
</dbReference>
<dbReference type="GO" id="GO:0010792">
    <property type="term" value="P:DNA double-strand break processing involved in repair via single-strand annealing"/>
    <property type="evidence" value="ECO:0000314"/>
    <property type="project" value="MGI"/>
</dbReference>
<dbReference type="GO" id="GO:0000730">
    <property type="term" value="P:DNA recombinase assembly"/>
    <property type="evidence" value="ECO:0007669"/>
    <property type="project" value="InterPro"/>
</dbReference>
<dbReference type="GO" id="GO:0006310">
    <property type="term" value="P:DNA recombination"/>
    <property type="evidence" value="ECO:0000315"/>
    <property type="project" value="UniProtKB"/>
</dbReference>
<dbReference type="GO" id="GO:0006302">
    <property type="term" value="P:double-strand break repair"/>
    <property type="evidence" value="ECO:0000304"/>
    <property type="project" value="ProtInc"/>
</dbReference>
<dbReference type="GO" id="GO:0000724">
    <property type="term" value="P:double-strand break repair via homologous recombination"/>
    <property type="evidence" value="ECO:0000318"/>
    <property type="project" value="GO_Central"/>
</dbReference>
<dbReference type="GO" id="GO:0045002">
    <property type="term" value="P:double-strand break repair via single-strand annealing"/>
    <property type="evidence" value="ECO:0000318"/>
    <property type="project" value="GO_Central"/>
</dbReference>
<dbReference type="GO" id="GO:0006312">
    <property type="term" value="P:mitotic recombination"/>
    <property type="evidence" value="ECO:0000318"/>
    <property type="project" value="GO_Central"/>
</dbReference>
<dbReference type="GO" id="GO:2000819">
    <property type="term" value="P:regulation of nucleotide-excision repair"/>
    <property type="evidence" value="ECO:0000314"/>
    <property type="project" value="MGI"/>
</dbReference>
<dbReference type="DisProt" id="DP00437"/>
<dbReference type="FunFam" id="3.30.390.80:FF:000001">
    <property type="entry name" value="DNA repair protein RAD52 homolog"/>
    <property type="match status" value="1"/>
</dbReference>
<dbReference type="Gene3D" id="3.30.390.80">
    <property type="entry name" value="DNA repair protein Rad52/59/22"/>
    <property type="match status" value="1"/>
</dbReference>
<dbReference type="InterPro" id="IPR004585">
    <property type="entry name" value="DNA_recomb/repair_Rad52"/>
</dbReference>
<dbReference type="InterPro" id="IPR041247">
    <property type="entry name" value="Rad52_fam"/>
</dbReference>
<dbReference type="InterPro" id="IPR007232">
    <property type="entry name" value="Rad52_Rad59_Rad22"/>
</dbReference>
<dbReference type="InterPro" id="IPR042525">
    <property type="entry name" value="Rad52_Rad59_Rad22_sf"/>
</dbReference>
<dbReference type="NCBIfam" id="TIGR00607">
    <property type="entry name" value="rad52"/>
    <property type="match status" value="1"/>
</dbReference>
<dbReference type="PANTHER" id="PTHR12132">
    <property type="entry name" value="DNA REPAIR AND RECOMBINATION PROTEIN RAD52, RAD59"/>
    <property type="match status" value="1"/>
</dbReference>
<dbReference type="PANTHER" id="PTHR12132:SF1">
    <property type="entry name" value="DNA REPAIR PROTEIN RAD52 HOMOLOG"/>
    <property type="match status" value="1"/>
</dbReference>
<dbReference type="Pfam" id="PF04098">
    <property type="entry name" value="Rad52_Rad22"/>
    <property type="match status" value="1"/>
</dbReference>
<dbReference type="SUPFAM" id="SSF54768">
    <property type="entry name" value="dsRNA-binding domain-like"/>
    <property type="match status" value="1"/>
</dbReference>
<keyword id="KW-0002">3D-structure</keyword>
<keyword id="KW-0025">Alternative splicing</keyword>
<keyword id="KW-0227">DNA damage</keyword>
<keyword id="KW-0233">DNA recombination</keyword>
<keyword id="KW-0234">DNA repair</keyword>
<keyword id="KW-0238">DNA-binding</keyword>
<keyword id="KW-0539">Nucleus</keyword>
<keyword id="KW-0597">Phosphoprotein</keyword>
<keyword id="KW-1267">Proteomics identification</keyword>
<keyword id="KW-1185">Reference proteome</keyword>
<protein>
    <recommendedName>
        <fullName>DNA repair protein RAD52 homolog</fullName>
    </recommendedName>
</protein>
<feature type="chain" id="PRO_0000173881" description="DNA repair protein RAD52 homolog">
    <location>
        <begin position="1"/>
        <end position="418"/>
    </location>
</feature>
<feature type="DNA-binding region">
    <location>
        <begin position="152"/>
        <end position="156"/>
    </location>
</feature>
<feature type="region of interest" description="Disordered" evidence="1">
    <location>
        <begin position="219"/>
        <end position="302"/>
    </location>
</feature>
<feature type="region of interest" description="Mediates interaction with RPA2" evidence="5">
    <location>
        <begin position="221"/>
        <end position="280"/>
    </location>
</feature>
<feature type="region of interest" description="Disordered" evidence="1">
    <location>
        <begin position="368"/>
        <end position="418"/>
    </location>
</feature>
<feature type="compositionally biased region" description="Low complexity" evidence="1">
    <location>
        <begin position="240"/>
        <end position="251"/>
    </location>
</feature>
<feature type="compositionally biased region" description="Polar residues" evidence="1">
    <location>
        <begin position="380"/>
        <end position="401"/>
    </location>
</feature>
<feature type="compositionally biased region" description="Basic and acidic residues" evidence="1">
    <location>
        <begin position="402"/>
        <end position="418"/>
    </location>
</feature>
<feature type="modified residue" description="Phosphotyrosine; by ABL1" evidence="3">
    <location>
        <position position="104"/>
    </location>
</feature>
<feature type="modified residue" description="Phosphoserine" evidence="11">
    <location>
        <position position="199"/>
    </location>
</feature>
<feature type="modified residue" description="Phosphothreonine" evidence="10">
    <location>
        <position position="318"/>
    </location>
</feature>
<feature type="modified residue" description="Phosphothreonine" evidence="11">
    <location>
        <position position="335"/>
    </location>
</feature>
<feature type="splice variant" id="VSP_047749" description="In isoform delta." evidence="7 8">
    <original>DFVDLNNGKFYVGVCAFVRVQLKDG</original>
    <variation>GEYALQQWGLLHCPAPAESLLWVRR</variation>
    <location>
        <begin position="94"/>
        <end position="118"/>
    </location>
</feature>
<feature type="splice variant" id="VSP_047750" description="In isoform gamma." evidence="7 8">
    <original>DGSYHEDVGYGVSEGLKSKALSL</original>
    <variation>VRGWSRPAARKDQWVVGEGWFIS</variation>
    <location>
        <begin position="117"/>
        <end position="139"/>
    </location>
</feature>
<feature type="splice variant" id="VSP_047751" description="In isoform delta." evidence="7 8">
    <location>
        <begin position="119"/>
        <end position="418"/>
    </location>
</feature>
<feature type="splice variant" id="VSP_047752" description="In isoform gamma." evidence="7 8">
    <location>
        <begin position="140"/>
        <end position="418"/>
    </location>
</feature>
<feature type="splice variant" id="VSP_047753" description="In isoform beta." evidence="7">
    <original>SFGNALGNCILDKDYLRSLNKLPRQLPLEVDLTKAKRQDLEPSVEEARYNSCRPNMALGHPQLQQVTSPS</original>
    <variation>LPLLGVSGRILYSLFSVHSVMCAGGLPTPTASAQTAPSSPCSSAVLRYAQEFWECTWKLYSGQRLPEITK</variation>
    <location>
        <begin position="157"/>
        <end position="226"/>
    </location>
</feature>
<feature type="splice variant" id="VSP_047754" description="In isoform beta." evidence="7">
    <location>
        <begin position="227"/>
        <end position="418"/>
    </location>
</feature>
<feature type="sequence variant" id="VAR_019218" description="In dbSNP:rs11571421." evidence="6">
    <original>R</original>
    <variation>W</variation>
    <location>
        <position position="70"/>
    </location>
</feature>
<feature type="sequence variant" id="VAR_019219" description="In dbSNP:rs4987206." evidence="6">
    <original>Q</original>
    <variation>E</variation>
    <location>
        <position position="221"/>
    </location>
</feature>
<feature type="sequence variant" id="VAR_019220" description="In dbSNP:rs11571463." evidence="6">
    <original>S</original>
    <variation>N</variation>
    <location>
        <position position="287"/>
    </location>
</feature>
<feature type="mutagenesis site" description="Abolishes ssDNA-binding." evidence="2">
    <original>R</original>
    <variation>A</variation>
    <location>
        <position position="55"/>
    </location>
</feature>
<feature type="mutagenesis site" description="Moderately defective in both ss and dsDNA-binding." evidence="2">
    <original>Y</original>
    <variation>A</variation>
    <location>
        <position position="65"/>
    </location>
</feature>
<feature type="mutagenesis site" description="Abolishes ssDNA-binding." evidence="2">
    <original>K</original>
    <variation>A</variation>
    <location>
        <position position="152"/>
    </location>
</feature>
<feature type="mutagenesis site" description="Moderately defective in both ss and dsDNA-binding." evidence="2">
    <original>R</original>
    <variation>A</variation>
    <location>
        <position position="153"/>
    </location>
</feature>
<feature type="mutagenesis site" description="Moderately defective in both ss and dsDNA-binding." evidence="2">
    <original>R</original>
    <variation>A</variation>
    <location>
        <position position="156"/>
    </location>
</feature>
<feature type="sequence conflict" description="In Ref. 3; AAA87554." evidence="9" ref="3">
    <original>N</original>
    <variation>K</variation>
    <location>
        <position position="100"/>
    </location>
</feature>
<feature type="sequence conflict" description="In Ref. 3; AAA87554." evidence="9" ref="3">
    <original>S</original>
    <variation>SY</variation>
    <location>
        <position position="418"/>
    </location>
</feature>
<feature type="turn" evidence="12">
    <location>
        <begin position="26"/>
        <end position="28"/>
    </location>
</feature>
<feature type="helix" evidence="14">
    <location>
        <begin position="33"/>
        <end position="43"/>
    </location>
</feature>
<feature type="helix" evidence="14">
    <location>
        <begin position="49"/>
        <end position="51"/>
    </location>
</feature>
<feature type="strand" evidence="14">
    <location>
        <begin position="53"/>
        <end position="56"/>
    </location>
</feature>
<feature type="strand" evidence="15">
    <location>
        <begin position="58"/>
        <end position="60"/>
    </location>
</feature>
<feature type="strand" evidence="14">
    <location>
        <begin position="62"/>
        <end position="65"/>
    </location>
</feature>
<feature type="helix" evidence="14">
    <location>
        <begin position="68"/>
        <end position="79"/>
    </location>
</feature>
<feature type="strand" evidence="14">
    <location>
        <begin position="83"/>
        <end position="99"/>
    </location>
</feature>
<feature type="strand" evidence="14">
    <location>
        <begin position="102"/>
        <end position="115"/>
    </location>
</feature>
<feature type="strand" evidence="14">
    <location>
        <begin position="120"/>
        <end position="133"/>
    </location>
</feature>
<feature type="helix" evidence="14">
    <location>
        <begin position="135"/>
        <end position="156"/>
    </location>
</feature>
<feature type="helix" evidence="14">
    <location>
        <begin position="160"/>
        <end position="162"/>
    </location>
</feature>
<feature type="helix" evidence="14">
    <location>
        <begin position="164"/>
        <end position="167"/>
    </location>
</feature>
<feature type="helix" evidence="14">
    <location>
        <begin position="169"/>
        <end position="177"/>
    </location>
</feature>
<feature type="helix" evidence="13">
    <location>
        <begin position="188"/>
        <end position="190"/>
    </location>
</feature>
<feature type="helix" evidence="14">
    <location>
        <begin position="198"/>
        <end position="207"/>
    </location>
</feature>
<proteinExistence type="evidence at protein level"/>
<evidence type="ECO:0000256" key="1">
    <source>
        <dbReference type="SAM" id="MobiDB-lite"/>
    </source>
</evidence>
<evidence type="ECO:0000269" key="2">
    <source>
    </source>
</evidence>
<evidence type="ECO:0000269" key="3">
    <source>
    </source>
</evidence>
<evidence type="ECO:0000269" key="4">
    <source>
    </source>
</evidence>
<evidence type="ECO:0000269" key="5">
    <source>
    </source>
</evidence>
<evidence type="ECO:0000269" key="6">
    <source ref="6"/>
</evidence>
<evidence type="ECO:0000303" key="7">
    <source>
    </source>
</evidence>
<evidence type="ECO:0000303" key="8">
    <source>
    </source>
</evidence>
<evidence type="ECO:0000305" key="9"/>
<evidence type="ECO:0007744" key="10">
    <source>
    </source>
</evidence>
<evidence type="ECO:0007744" key="11">
    <source>
    </source>
</evidence>
<evidence type="ECO:0007829" key="12">
    <source>
        <dbReference type="PDB" id="1KN0"/>
    </source>
</evidence>
<evidence type="ECO:0007829" key="13">
    <source>
        <dbReference type="PDB" id="5JRB"/>
    </source>
</evidence>
<evidence type="ECO:0007829" key="14">
    <source>
        <dbReference type="PDB" id="8BJM"/>
    </source>
</evidence>
<evidence type="ECO:0007829" key="15">
    <source>
        <dbReference type="PDB" id="8RJW"/>
    </source>
</evidence>
<sequence length="418" mass="46169">MSGTEEAILGGRDSHPAAGGGSVLCFGQCQYTAEEYQAIQKALRQRLGPEYISSRMAGGGQKVCYIEGHRVINLANEMFGYNGWAHSITQQNVDFVDLNNGKFYVGVCAFVRVQLKDGSYHEDVGYGVSEGLKSKALSLEKARKEAVTDGLKRALRSFGNALGNCILDKDYLRSLNKLPRQLPLEVDLTKAKRQDLEPSVEEARYNSCRPNMALGHPQLQQVTSPSRPSHAVIPADQDCSSRSLSSSAVESEATHQRKLRQKQLQQQFRERMEKQQVRVSTPSAEKSEAAPPAPPVTHSTPVTVSEPLLEKDFLAGVTQELIKTLEDNSEKWAVTPDAGDGVVKPSSRADPAQTSDTLALNNQMVTQNRTPHSVCHQKPQAKSGSWDLQTYSADQRTTGNWESHRKSQDMKKRKYDPS</sequence>